<dbReference type="EC" id="2.3.1.-" evidence="14"/>
<dbReference type="EMBL" id="DQ062353">
    <property type="protein sequence ID" value="AAZ23694.1"/>
    <property type="molecule type" value="mRNA"/>
</dbReference>
<dbReference type="EMBL" id="DQ062354">
    <property type="protein sequence ID" value="AAZ23695.1"/>
    <property type="molecule type" value="mRNA"/>
</dbReference>
<dbReference type="EMBL" id="DQ062355">
    <property type="protein sequence ID" value="AAZ23696.1"/>
    <property type="molecule type" value="mRNA"/>
</dbReference>
<dbReference type="EMBL" id="DQ062356">
    <property type="protein sequence ID" value="AAZ23697.1"/>
    <property type="molecule type" value="mRNA"/>
</dbReference>
<dbReference type="EMBL" id="DQ062357">
    <property type="protein sequence ID" value="AAZ23698.1"/>
    <property type="molecule type" value="mRNA"/>
</dbReference>
<dbReference type="EMBL" id="DQ062359">
    <property type="protein sequence ID" value="AAZ23700.1"/>
    <property type="molecule type" value="mRNA"/>
</dbReference>
<dbReference type="EMBL" id="DQ062360">
    <property type="protein sequence ID" value="AAZ23701.1"/>
    <property type="molecule type" value="mRNA"/>
</dbReference>
<dbReference type="EMBL" id="DQ062362">
    <property type="protein sequence ID" value="AAZ23703.1"/>
    <property type="molecule type" value="mRNA"/>
</dbReference>
<dbReference type="EMBL" id="DQ062365">
    <property type="protein sequence ID" value="AAZ23706.1"/>
    <property type="molecule type" value="mRNA"/>
</dbReference>
<dbReference type="EMBL" id="DQ062366">
    <property type="protein sequence ID" value="AAZ23707.1"/>
    <property type="molecule type" value="mRNA"/>
</dbReference>
<dbReference type="EMBL" id="DQ062369">
    <property type="protein sequence ID" value="AAZ23710.1"/>
    <property type="molecule type" value="mRNA"/>
</dbReference>
<dbReference type="EMBL" id="DQ062370">
    <property type="protein sequence ID" value="AAZ23711.1"/>
    <property type="molecule type" value="mRNA"/>
</dbReference>
<dbReference type="EMBL" id="DQ062371">
    <property type="protein sequence ID" value="AAZ23712.1"/>
    <property type="molecule type" value="mRNA"/>
</dbReference>
<dbReference type="EMBL" id="DQ062372">
    <property type="protein sequence ID" value="AAZ23713.1"/>
    <property type="molecule type" value="mRNA"/>
</dbReference>
<dbReference type="EMBL" id="DQ062373">
    <property type="protein sequence ID" value="AAZ23714.1"/>
    <property type="molecule type" value="mRNA"/>
</dbReference>
<dbReference type="EMBL" id="DQ062374">
    <property type="protein sequence ID" value="AAZ23715.1"/>
    <property type="molecule type" value="mRNA"/>
</dbReference>
<dbReference type="EMBL" id="DQ062375">
    <property type="protein sequence ID" value="AAZ23716.1"/>
    <property type="molecule type" value="mRNA"/>
</dbReference>
<dbReference type="EMBL" id="DQ062377">
    <property type="protein sequence ID" value="AAZ23718.1"/>
    <property type="molecule type" value="mRNA"/>
</dbReference>
<dbReference type="EMBL" id="DQ062378">
    <property type="protein sequence ID" value="AAZ23719.1"/>
    <property type="molecule type" value="mRNA"/>
</dbReference>
<dbReference type="EMBL" id="DQ062379">
    <property type="protein sequence ID" value="AAZ23720.1"/>
    <property type="molecule type" value="mRNA"/>
</dbReference>
<dbReference type="EMBL" id="DQ062381">
    <property type="protein sequence ID" value="AAZ23722.1"/>
    <property type="molecule type" value="mRNA"/>
</dbReference>
<dbReference type="EMBL" id="DQ062382">
    <property type="protein sequence ID" value="AAZ23723.1"/>
    <property type="molecule type" value="mRNA"/>
</dbReference>
<dbReference type="EMBL" id="DQ062383">
    <property type="protein sequence ID" value="AAZ23724.1"/>
    <property type="molecule type" value="mRNA"/>
</dbReference>
<dbReference type="EMBL" id="DQ062384">
    <property type="protein sequence ID" value="AAZ23725.1"/>
    <property type="molecule type" value="mRNA"/>
</dbReference>
<dbReference type="EMBL" id="AL079347">
    <property type="protein sequence ID" value="CAB45446.1"/>
    <property type="molecule type" value="Genomic_DNA"/>
</dbReference>
<dbReference type="EMBL" id="AL161586">
    <property type="protein sequence ID" value="CAB80202.1"/>
    <property type="molecule type" value="Genomic_DNA"/>
</dbReference>
<dbReference type="EMBL" id="CP002687">
    <property type="protein sequence ID" value="AEE86428.1"/>
    <property type="molecule type" value="Genomic_DNA"/>
</dbReference>
<dbReference type="EMBL" id="DQ446894">
    <property type="protein sequence ID" value="ABE66111.1"/>
    <property type="molecule type" value="mRNA"/>
</dbReference>
<dbReference type="EMBL" id="DQ653244">
    <property type="protein sequence ID" value="ABK28665.1"/>
    <property type="status" value="ALT_SEQ"/>
    <property type="molecule type" value="mRNA"/>
</dbReference>
<dbReference type="EMBL" id="AY085918">
    <property type="protein sequence ID" value="AAM63130.1"/>
    <property type="molecule type" value="mRNA"/>
</dbReference>
<dbReference type="PIR" id="T10231">
    <property type="entry name" value="T10231"/>
</dbReference>
<dbReference type="RefSeq" id="NP_567971.1">
    <property type="nucleotide sequence ID" value="NM_119651.4"/>
</dbReference>
<dbReference type="SMR" id="Q8LDM2"/>
<dbReference type="FunCoup" id="Q8LDM2">
    <property type="interactions" value="23"/>
</dbReference>
<dbReference type="IntAct" id="Q8LDM2">
    <property type="interactions" value="3"/>
</dbReference>
<dbReference type="STRING" id="3702.Q8LDM2"/>
<dbReference type="PaxDb" id="3702-AT4G34850.1"/>
<dbReference type="EnsemblPlants" id="AT4G34850.1">
    <property type="protein sequence ID" value="AT4G34850.1"/>
    <property type="gene ID" value="AT4G34850"/>
</dbReference>
<dbReference type="GeneID" id="829637"/>
<dbReference type="Gramene" id="AT4G34850.1">
    <property type="protein sequence ID" value="AT4G34850.1"/>
    <property type="gene ID" value="AT4G34850"/>
</dbReference>
<dbReference type="KEGG" id="ath:AT4G34850"/>
<dbReference type="Araport" id="AT4G34850"/>
<dbReference type="TAIR" id="AT4G34850">
    <property type="gene designation" value="LAP5"/>
</dbReference>
<dbReference type="eggNOG" id="ENOG502QSSY">
    <property type="taxonomic scope" value="Eukaryota"/>
</dbReference>
<dbReference type="HOGENOM" id="CLU_034992_2_0_1"/>
<dbReference type="InParanoid" id="Q8LDM2"/>
<dbReference type="OrthoDB" id="329835at2759"/>
<dbReference type="PhylomeDB" id="Q8LDM2"/>
<dbReference type="BioCyc" id="ARA:AT4G34850-MONOMER"/>
<dbReference type="BioCyc" id="MetaCyc:AT4G34850-MONOMER"/>
<dbReference type="UniPathway" id="UPA00154"/>
<dbReference type="PRO" id="PR:Q8LDM2"/>
<dbReference type="Proteomes" id="UP000006548">
    <property type="component" value="Chromosome 4"/>
</dbReference>
<dbReference type="ExpressionAtlas" id="Q8LDM2">
    <property type="expression patterns" value="baseline and differential"/>
</dbReference>
<dbReference type="GO" id="GO:0005783">
    <property type="term" value="C:endoplasmic reticulum"/>
    <property type="evidence" value="ECO:0000314"/>
    <property type="project" value="TAIR"/>
</dbReference>
<dbReference type="GO" id="GO:0090439">
    <property type="term" value="F:tetraketide alpha-pyrone synthase activity"/>
    <property type="evidence" value="ECO:0000314"/>
    <property type="project" value="TAIR"/>
</dbReference>
<dbReference type="GO" id="GO:0009813">
    <property type="term" value="P:flavonoid biosynthetic process"/>
    <property type="evidence" value="ECO:0007669"/>
    <property type="project" value="UniProtKB-UniPathway"/>
</dbReference>
<dbReference type="GO" id="GO:0010584">
    <property type="term" value="P:pollen exine formation"/>
    <property type="evidence" value="ECO:0000315"/>
    <property type="project" value="TAIR"/>
</dbReference>
<dbReference type="GO" id="GO:0030639">
    <property type="term" value="P:polyketide biosynthetic process"/>
    <property type="evidence" value="ECO:0000314"/>
    <property type="project" value="TAIR"/>
</dbReference>
<dbReference type="GO" id="GO:0080110">
    <property type="term" value="P:sporopollenin biosynthetic process"/>
    <property type="evidence" value="ECO:0000315"/>
    <property type="project" value="TAIR"/>
</dbReference>
<dbReference type="CDD" id="cd00831">
    <property type="entry name" value="CHS_like"/>
    <property type="match status" value="1"/>
</dbReference>
<dbReference type="FunFam" id="3.40.47.10:FF:000014">
    <property type="entry name" value="Chalcone synthase 1"/>
    <property type="match status" value="1"/>
</dbReference>
<dbReference type="FunFam" id="3.40.47.10:FF:000025">
    <property type="entry name" value="Chalcone synthase 2"/>
    <property type="match status" value="1"/>
</dbReference>
<dbReference type="Gene3D" id="3.40.47.10">
    <property type="match status" value="2"/>
</dbReference>
<dbReference type="InterPro" id="IPR012328">
    <property type="entry name" value="Chalcone/stilbene_synt_C"/>
</dbReference>
<dbReference type="InterPro" id="IPR001099">
    <property type="entry name" value="Chalcone/stilbene_synt_N"/>
</dbReference>
<dbReference type="InterPro" id="IPR011141">
    <property type="entry name" value="Polyketide_synthase_type-III"/>
</dbReference>
<dbReference type="InterPro" id="IPR016039">
    <property type="entry name" value="Thiolase-like"/>
</dbReference>
<dbReference type="PANTHER" id="PTHR11877">
    <property type="entry name" value="HYDROXYMETHYLGLUTARYL-COA SYNTHASE"/>
    <property type="match status" value="1"/>
</dbReference>
<dbReference type="PANTHER" id="PTHR11877:SF10">
    <property type="entry name" value="TYPE III POLYKETIDE SYNTHASE B"/>
    <property type="match status" value="1"/>
</dbReference>
<dbReference type="Pfam" id="PF02797">
    <property type="entry name" value="Chal_sti_synt_C"/>
    <property type="match status" value="1"/>
</dbReference>
<dbReference type="Pfam" id="PF00195">
    <property type="entry name" value="Chal_sti_synt_N"/>
    <property type="match status" value="1"/>
</dbReference>
<dbReference type="PIRSF" id="PIRSF000451">
    <property type="entry name" value="PKS_III"/>
    <property type="match status" value="1"/>
</dbReference>
<dbReference type="SUPFAM" id="SSF53901">
    <property type="entry name" value="Thiolase-like"/>
    <property type="match status" value="2"/>
</dbReference>
<keyword id="KW-0012">Acyltransferase</keyword>
<keyword id="KW-0217">Developmental protein</keyword>
<keyword id="KW-0256">Endoplasmic reticulum</keyword>
<keyword id="KW-0284">Flavonoid biosynthesis</keyword>
<keyword id="KW-1185">Reference proteome</keyword>
<keyword id="KW-0808">Transferase</keyword>
<accession>Q8LDM2</accession>
<accession>A0MFB8</accession>
<accession>Q9SW49</accession>
<proteinExistence type="evidence at protein level"/>
<protein>
    <recommendedName>
        <fullName evidence="10">Type III polyketide synthase B</fullName>
        <shortName>PKS-B</shortName>
        <ecNumber evidence="14">2.3.1.-</ecNumber>
    </recommendedName>
    <alternativeName>
        <fullName evidence="12">Hydroxyalkyl alpha-pyrone synthase PKS-B</fullName>
    </alternativeName>
    <alternativeName>
        <fullName evidence="11">Protein LESS ADHESIVE POLLEN 5</fullName>
    </alternativeName>
</protein>
<sequence length="392" mass="42982">MGSIDAAVLGSEKKSNPGKATILALGKAFPHQLVMQEYLVDGYFKTTKCDDPELKQKLTRLCKTTTVKTRYVVMSEEILKKYPELAIEGGSTVTQRLDICNDAVTEMAVEASRACIKNWGRSISDITHVVYVSSSEARLPGGDLYLAKGLGLSPDTHRVLLYFVGCSGGVAGLRVAKDIAENNPGSRVLLATSETTIIGFKPPSVDRPYDLVGVALFGDGAGAMIIGSDPDPICEKPLFELHTAIQNFLPETEKTIDGRLTEQGINFKLSRELPQIIEDNVENFCKKLIGKAGLAHKNYNQMFWAVHPGGPAILNRIEKRLNLSPEKLSPSRRALMDYGNASSNSIVYVLEYMLEESKKVRNMNEEENEWGLILAFGPGVTFEGIIARNLDV</sequence>
<organism evidence="18">
    <name type="scientific">Arabidopsis thaliana</name>
    <name type="common">Mouse-ear cress</name>
    <dbReference type="NCBI Taxonomy" id="3702"/>
    <lineage>
        <taxon>Eukaryota</taxon>
        <taxon>Viridiplantae</taxon>
        <taxon>Streptophyta</taxon>
        <taxon>Embryophyta</taxon>
        <taxon>Tracheophyta</taxon>
        <taxon>Spermatophyta</taxon>
        <taxon>Magnoliopsida</taxon>
        <taxon>eudicotyledons</taxon>
        <taxon>Gunneridae</taxon>
        <taxon>Pentapetalae</taxon>
        <taxon>rosids</taxon>
        <taxon>malvids</taxon>
        <taxon>Brassicales</taxon>
        <taxon>Brassicaceae</taxon>
        <taxon>Camelineae</taxon>
        <taxon>Arabidopsis</taxon>
    </lineage>
</organism>
<evidence type="ECO:0000250" key="1">
    <source>
        <dbReference type="UniProtKB" id="P30074"/>
    </source>
</evidence>
<evidence type="ECO:0000250" key="2">
    <source>
        <dbReference type="UniProtKB" id="Q58VP7"/>
    </source>
</evidence>
<evidence type="ECO:0000250" key="3">
    <source>
        <dbReference type="UniProtKB" id="Q94FV7"/>
    </source>
</evidence>
<evidence type="ECO:0000250" key="4">
    <source>
        <dbReference type="UniProtKB" id="Q9LKP7"/>
    </source>
</evidence>
<evidence type="ECO:0000255" key="5">
    <source>
        <dbReference type="PROSITE-ProRule" id="PRU10023"/>
    </source>
</evidence>
<evidence type="ECO:0000269" key="6">
    <source>
    </source>
</evidence>
<evidence type="ECO:0000269" key="7">
    <source>
    </source>
</evidence>
<evidence type="ECO:0000269" key="8">
    <source>
    </source>
</evidence>
<evidence type="ECO:0000269" key="9">
    <source>
    </source>
</evidence>
<evidence type="ECO:0000303" key="10">
    <source>
    </source>
</evidence>
<evidence type="ECO:0000303" key="11">
    <source>
    </source>
</evidence>
<evidence type="ECO:0000303" key="12">
    <source>
    </source>
</evidence>
<evidence type="ECO:0000305" key="13"/>
<evidence type="ECO:0000305" key="14">
    <source>
    </source>
</evidence>
<evidence type="ECO:0000312" key="15">
    <source>
        <dbReference type="Araport" id="AT4G34850"/>
    </source>
</evidence>
<evidence type="ECO:0000312" key="16">
    <source>
        <dbReference type="EMBL" id="AEE86428.1"/>
    </source>
</evidence>
<evidence type="ECO:0000312" key="17">
    <source>
        <dbReference type="EMBL" id="CAB45446.1"/>
    </source>
</evidence>
<evidence type="ECO:0000312" key="18">
    <source>
        <dbReference type="Proteomes" id="UP000006548"/>
    </source>
</evidence>
<feature type="chain" id="PRO_0000432841" description="Type III polyketide synthase B">
    <location>
        <begin position="1"/>
        <end position="392"/>
    </location>
</feature>
<feature type="active site" description="Nucleophile" evidence="3 5">
    <location>
        <position position="166"/>
    </location>
</feature>
<feature type="binding site" evidence="1">
    <location>
        <begin position="57"/>
        <end position="64"/>
    </location>
    <ligand>
        <name>CoA</name>
        <dbReference type="ChEBI" id="CHEBI:57287"/>
    </ligand>
</feature>
<feature type="binding site" evidence="1">
    <location>
        <begin position="218"/>
        <end position="219"/>
    </location>
    <ligand>
        <name>substrate</name>
    </ligand>
</feature>
<feature type="binding site" evidence="2">
    <location>
        <position position="269"/>
    </location>
    <ligand>
        <name>CoA</name>
        <dbReference type="ChEBI" id="CHEBI:57287"/>
    </ligand>
</feature>
<feature type="binding site" evidence="2">
    <location>
        <begin position="309"/>
        <end position="312"/>
    </location>
    <ligand>
        <name>CoA</name>
        <dbReference type="ChEBI" id="CHEBI:57287"/>
    </ligand>
</feature>
<feature type="binding site" evidence="1">
    <location>
        <position position="312"/>
    </location>
    <ligand>
        <name>CoA</name>
        <dbReference type="ChEBI" id="CHEBI:57287"/>
    </ligand>
</feature>
<feature type="mutagenesis site" description="In lap5-1; pollen exine layer defects leading to altered pollen-stigma adhesion." evidence="7">
    <original>G</original>
    <variation>E</variation>
    <location>
        <position position="227"/>
    </location>
</feature>
<feature type="sequence conflict" description="In Ref. 2; CAB45446/CAB80202." evidence="13" ref="2">
    <location>
        <begin position="61"/>
        <end position="62"/>
    </location>
</feature>
<comment type="function">
    <text evidence="6 7 8">Plant type III polyketide synthases (PKSs) that catalyzes the condensation of malonyl-CoA units with various CoA ester starter molecules to generate a diverse array of natural products including long-chain alkyl alpha-pyrones. Accepts up to C(20) chain-length fatty acyl CoAs as starter substrates, and carries out sequential condensations with malonyl-CoA to produce triketide and tetraketide alpha-pyrones, potential sporopollenin precursors (PubMed:19043200, PubMed:21193570). Favorite substrates for are midchain- and v-hydroxylated fatty acyl-CoAs (e.g. 12-hydroxyoctadecanoyl-CoA and 16-hydroxyhexadecanoyl-CoA). Required for pollen development and sporopollenin biosynthesis, the major constituent of exine in the outer pollen wall (PubMed:20442277, PubMed:21193570). In vitro, can use 4-coumaroyl-coenzyme A as substrate to produce bis-noryangonin and fatty acyl-coenzyme A as substrate to produce medium-chain alkyl pyrones. May play a role in both the synthesis of pollen fatty acids and phenolics found in exine (PubMed:20442277).</text>
</comment>
<comment type="biophysicochemical properties">
    <kinetics>
        <KM evidence="6">30.4 uM for n-dodecanoyl-CoA (at pH 7 and 30 degrees Celsius)</KM>
        <text evidence="6">kcat is 0.06 min(-1) with n-dodecanoyl-CoA as substrate for the production of the triketide alpha-pyrone (at pH 7 and 30 degrees Celsius).</text>
    </kinetics>
    <phDependence>
        <text evidence="6">Optimum pH is 7 (at 30 degrees Celsius).</text>
    </phDependence>
</comment>
<comment type="pathway">
    <text evidence="4">Secondary metabolite biosynthesis; flavonoid biosynthesis.</text>
</comment>
<comment type="subunit">
    <text evidence="1 9">Homodimer (By similarity). Interacts with 4CLL1/ACOS5 and TKPR1 (PubMed:23632852).</text>
</comment>
<comment type="interaction">
    <interactant intactId="EBI-30859537">
        <id>Q8LDM2</id>
    </interactant>
    <interactant intactId="EBI-30859465">
        <id>Q9LQ12</id>
        <label>4CLL1</label>
    </interactant>
    <organismsDiffer>false</organismsDiffer>
    <experiments>4</experiments>
</comment>
<comment type="interaction">
    <interactant intactId="EBI-30859537">
        <id>Q8LDM2</id>
    </interactant>
    <interactant intactId="EBI-4432350">
        <id>Q500U8</id>
        <label>TKPR1</label>
    </interactant>
    <organismsDiffer>false</organismsDiffer>
    <experiments>2</experiments>
</comment>
<comment type="subcellular location">
    <subcellularLocation>
        <location evidence="8 9">Endoplasmic reticulum</location>
    </subcellularLocation>
</comment>
<comment type="tissue specificity">
    <text evidence="7 8 9">Expressed in flowers and flower buds (at protein level) (PubMed:20442277, PubMed:21193570). Mostly confined to anther tapetal cells (PubMed:23632852).</text>
</comment>
<comment type="developmental stage">
    <text evidence="7 8">Most abundant in the youngest flower buds, but levels decline as flowers mature. Specifically and transiently expressed in tapetal cells during microspore development in anthers (at protein level).</text>
</comment>
<comment type="disruption phenotype">
    <text evidence="7 8">Pollen exine layer defects. Reduced accumulation of flavonoid precursors and flavonoids in developing anthers. Plants lacking both PKS-A and PKS-B are completely male sterile, with no apparent exine, thus leading to pollen grain collapse under vacuum. Altered pollen-stigma adhesion.</text>
</comment>
<comment type="similarity">
    <text evidence="13">Belongs to the thiolase-like superfamily. Chalcone/stilbene synthases family.</text>
</comment>
<comment type="sequence caution" evidence="13">
    <conflict type="erroneous termination">
        <sequence resource="EMBL-CDS" id="ABK28665"/>
    </conflict>
    <text>Extended C-terminus.</text>
</comment>
<name>PKSB_ARATH</name>
<reference key="1">
    <citation type="journal article" date="2007" name="Mol. Phylogenet. Evol.">
        <title>Diverse selective modes among orthologs/paralogs of the chalcone synthase (Chs) gene family of Arabidopsis thaliana and its relative A. halleri ssp. gemmifera.</title>
        <authorList>
            <person name="Wang W.-K."/>
            <person name="Schaal B.A."/>
            <person name="Chiou Y.-M."/>
            <person name="Murakami N."/>
            <person name="Ge X.-J."/>
            <person name="Huang C.-C."/>
            <person name="Chiang T.-Y."/>
        </authorList>
    </citation>
    <scope>NUCLEOTIDE SEQUENCE [MRNA]</scope>
    <source>
        <strain>cv. Ag-0</strain>
        <strain>cv. Ba-1</strain>
        <strain>cv. Bl-1</strain>
        <strain>cv. Bla-1</strain>
        <strain>cv. Br-0</strain>
        <strain>cv. Can-0</strain>
        <strain>cv. Chi-0</strain>
        <strain>cv. Co-1</strain>
        <strain>cv. En-D</strain>
        <strain>cv. En-T</strain>
        <strain>cv. Es-0</strain>
        <strain>cv. Gr-1</strain>
        <strain>cv. Ita-0</strain>
        <strain>cv. Kin-0</strain>
        <strain>cv. Lip-0</strain>
        <strain>cv. Mt-0</strain>
        <strain>cv. Mv-0</strain>
        <strain>cv. Pog-0</strain>
        <strain>cv. Ri-0</strain>
        <strain>cv. Rs-1</strain>
        <strain>cv. St-0</strain>
        <strain>cv. Tsu-0</strain>
        <strain>cv. Van-0</strain>
        <strain>cv. Yo-0</strain>
    </source>
</reference>
<reference key="2">
    <citation type="journal article" date="1999" name="Nature">
        <title>Sequence and analysis of chromosome 4 of the plant Arabidopsis thaliana.</title>
        <authorList>
            <person name="Mayer K.F.X."/>
            <person name="Schueller C."/>
            <person name="Wambutt R."/>
            <person name="Murphy G."/>
            <person name="Volckaert G."/>
            <person name="Pohl T."/>
            <person name="Duesterhoeft A."/>
            <person name="Stiekema W."/>
            <person name="Entian K.-D."/>
            <person name="Terryn N."/>
            <person name="Harris B."/>
            <person name="Ansorge W."/>
            <person name="Brandt P."/>
            <person name="Grivell L.A."/>
            <person name="Rieger M."/>
            <person name="Weichselgartner M."/>
            <person name="de Simone V."/>
            <person name="Obermaier B."/>
            <person name="Mache R."/>
            <person name="Mueller M."/>
            <person name="Kreis M."/>
            <person name="Delseny M."/>
            <person name="Puigdomenech P."/>
            <person name="Watson M."/>
            <person name="Schmidtheini T."/>
            <person name="Reichert B."/>
            <person name="Portetelle D."/>
            <person name="Perez-Alonso M."/>
            <person name="Boutry M."/>
            <person name="Bancroft I."/>
            <person name="Vos P."/>
            <person name="Hoheisel J."/>
            <person name="Zimmermann W."/>
            <person name="Wedler H."/>
            <person name="Ridley P."/>
            <person name="Langham S.-A."/>
            <person name="McCullagh B."/>
            <person name="Bilham L."/>
            <person name="Robben J."/>
            <person name="van der Schueren J."/>
            <person name="Grymonprez B."/>
            <person name="Chuang Y.-J."/>
            <person name="Vandenbussche F."/>
            <person name="Braeken M."/>
            <person name="Weltjens I."/>
            <person name="Voet M."/>
            <person name="Bastiaens I."/>
            <person name="Aert R."/>
            <person name="Defoor E."/>
            <person name="Weitzenegger T."/>
            <person name="Bothe G."/>
            <person name="Ramsperger U."/>
            <person name="Hilbert H."/>
            <person name="Braun M."/>
            <person name="Holzer E."/>
            <person name="Brandt A."/>
            <person name="Peters S."/>
            <person name="van Staveren M."/>
            <person name="Dirkse W."/>
            <person name="Mooijman P."/>
            <person name="Klein Lankhorst R."/>
            <person name="Rose M."/>
            <person name="Hauf J."/>
            <person name="Koetter P."/>
            <person name="Berneiser S."/>
            <person name="Hempel S."/>
            <person name="Feldpausch M."/>
            <person name="Lamberth S."/>
            <person name="Van den Daele H."/>
            <person name="De Keyser A."/>
            <person name="Buysshaert C."/>
            <person name="Gielen J."/>
            <person name="Villarroel R."/>
            <person name="De Clercq R."/>
            <person name="van Montagu M."/>
            <person name="Rogers J."/>
            <person name="Cronin A."/>
            <person name="Quail M.A."/>
            <person name="Bray-Allen S."/>
            <person name="Clark L."/>
            <person name="Doggett J."/>
            <person name="Hall S."/>
            <person name="Kay M."/>
            <person name="Lennard N."/>
            <person name="McLay K."/>
            <person name="Mayes R."/>
            <person name="Pettett A."/>
            <person name="Rajandream M.A."/>
            <person name="Lyne M."/>
            <person name="Benes V."/>
            <person name="Rechmann S."/>
            <person name="Borkova D."/>
            <person name="Bloecker H."/>
            <person name="Scharfe M."/>
            <person name="Grimm M."/>
            <person name="Loehnert T.-H."/>
            <person name="Dose S."/>
            <person name="de Haan M."/>
            <person name="Maarse A.C."/>
            <person name="Schaefer M."/>
            <person name="Mueller-Auer S."/>
            <person name="Gabel C."/>
            <person name="Fuchs M."/>
            <person name="Fartmann B."/>
            <person name="Granderath K."/>
            <person name="Dauner D."/>
            <person name="Herzl A."/>
            <person name="Neumann S."/>
            <person name="Argiriou A."/>
            <person name="Vitale D."/>
            <person name="Liguori R."/>
            <person name="Piravandi E."/>
            <person name="Massenet O."/>
            <person name="Quigley F."/>
            <person name="Clabauld G."/>
            <person name="Muendlein A."/>
            <person name="Felber R."/>
            <person name="Schnabl S."/>
            <person name="Hiller R."/>
            <person name="Schmidt W."/>
            <person name="Lecharny A."/>
            <person name="Aubourg S."/>
            <person name="Chefdor F."/>
            <person name="Cooke R."/>
            <person name="Berger C."/>
            <person name="Monfort A."/>
            <person name="Casacuberta E."/>
            <person name="Gibbons T."/>
            <person name="Weber N."/>
            <person name="Vandenbol M."/>
            <person name="Bargues M."/>
            <person name="Terol J."/>
            <person name="Torres A."/>
            <person name="Perez-Perez A."/>
            <person name="Purnelle B."/>
            <person name="Bent E."/>
            <person name="Johnson S."/>
            <person name="Tacon D."/>
            <person name="Jesse T."/>
            <person name="Heijnen L."/>
            <person name="Schwarz S."/>
            <person name="Scholler P."/>
            <person name="Heber S."/>
            <person name="Francs P."/>
            <person name="Bielke C."/>
            <person name="Frishman D."/>
            <person name="Haase D."/>
            <person name="Lemcke K."/>
            <person name="Mewes H.-W."/>
            <person name="Stocker S."/>
            <person name="Zaccaria P."/>
            <person name="Bevan M."/>
            <person name="Wilson R.K."/>
            <person name="de la Bastide M."/>
            <person name="Habermann K."/>
            <person name="Parnell L."/>
            <person name="Dedhia N."/>
            <person name="Gnoj L."/>
            <person name="Schutz K."/>
            <person name="Huang E."/>
            <person name="Spiegel L."/>
            <person name="Sekhon M."/>
            <person name="Murray J."/>
            <person name="Sheet P."/>
            <person name="Cordes M."/>
            <person name="Abu-Threideh J."/>
            <person name="Stoneking T."/>
            <person name="Kalicki J."/>
            <person name="Graves T."/>
            <person name="Harmon G."/>
            <person name="Edwards J."/>
            <person name="Latreille P."/>
            <person name="Courtney L."/>
            <person name="Cloud J."/>
            <person name="Abbott A."/>
            <person name="Scott K."/>
            <person name="Johnson D."/>
            <person name="Minx P."/>
            <person name="Bentley D."/>
            <person name="Fulton B."/>
            <person name="Miller N."/>
            <person name="Greco T."/>
            <person name="Kemp K."/>
            <person name="Kramer J."/>
            <person name="Fulton L."/>
            <person name="Mardis E."/>
            <person name="Dante M."/>
            <person name="Pepin K."/>
            <person name="Hillier L.W."/>
            <person name="Nelson J."/>
            <person name="Spieth J."/>
            <person name="Ryan E."/>
            <person name="Andrews S."/>
            <person name="Geisel C."/>
            <person name="Layman D."/>
            <person name="Du H."/>
            <person name="Ali J."/>
            <person name="Berghoff A."/>
            <person name="Jones K."/>
            <person name="Drone K."/>
            <person name="Cotton M."/>
            <person name="Joshu C."/>
            <person name="Antonoiu B."/>
            <person name="Zidanic M."/>
            <person name="Strong C."/>
            <person name="Sun H."/>
            <person name="Lamar B."/>
            <person name="Yordan C."/>
            <person name="Ma P."/>
            <person name="Zhong J."/>
            <person name="Preston R."/>
            <person name="Vil D."/>
            <person name="Shekher M."/>
            <person name="Matero A."/>
            <person name="Shah R."/>
            <person name="Swaby I.K."/>
            <person name="O'Shaughnessy A."/>
            <person name="Rodriguez M."/>
            <person name="Hoffman J."/>
            <person name="Till S."/>
            <person name="Granat S."/>
            <person name="Shohdy N."/>
            <person name="Hasegawa A."/>
            <person name="Hameed A."/>
            <person name="Lodhi M."/>
            <person name="Johnson A."/>
            <person name="Chen E."/>
            <person name="Marra M.A."/>
            <person name="Martienssen R."/>
            <person name="McCombie W.R."/>
        </authorList>
    </citation>
    <scope>NUCLEOTIDE SEQUENCE [LARGE SCALE GENOMIC DNA]</scope>
    <source>
        <strain>cv. Columbia</strain>
    </source>
</reference>
<reference key="3">
    <citation type="journal article" date="2017" name="Plant J.">
        <title>Araport11: a complete reannotation of the Arabidopsis thaliana reference genome.</title>
        <authorList>
            <person name="Cheng C.Y."/>
            <person name="Krishnakumar V."/>
            <person name="Chan A.P."/>
            <person name="Thibaud-Nissen F."/>
            <person name="Schobel S."/>
            <person name="Town C.D."/>
        </authorList>
    </citation>
    <scope>GENOME REANNOTATION</scope>
    <source>
        <strain>cv. Columbia</strain>
    </source>
</reference>
<reference key="4">
    <citation type="submission" date="2002-03" db="EMBL/GenBank/DDBJ databases">
        <title>Full-length cDNA from Arabidopsis thaliana.</title>
        <authorList>
            <person name="Brover V.V."/>
            <person name="Troukhan M.E."/>
            <person name="Alexandrov N.A."/>
            <person name="Lu Y.-P."/>
            <person name="Flavell R.B."/>
            <person name="Feldmann K.A."/>
        </authorList>
    </citation>
    <scope>NUCLEOTIDE SEQUENCE [LARGE SCALE MRNA]</scope>
</reference>
<reference key="5">
    <citation type="journal article" date="2006" name="Plant Biotechnol. J.">
        <title>Simultaneous high-throughput recombinational cloning of open reading frames in closed and open configurations.</title>
        <authorList>
            <person name="Underwood B.A."/>
            <person name="Vanderhaeghen R."/>
            <person name="Whitford R."/>
            <person name="Town C.D."/>
            <person name="Hilson P."/>
        </authorList>
    </citation>
    <scope>NUCLEOTIDE SEQUENCE [LARGE SCALE MRNA]</scope>
    <source>
        <strain>cv. Columbia</strain>
    </source>
</reference>
<reference key="6">
    <citation type="journal article" date="2008" name="Biol. Pharm. Bull.">
        <title>Structure function analysis of novel type III polyketide synthases from Arabidopsis thaliana.</title>
        <authorList>
            <person name="Mizuuchi Y."/>
            <person name="Shimokawa Y."/>
            <person name="Wanibuchi K."/>
            <person name="Noguchi H."/>
            <person name="Abe I."/>
        </authorList>
    </citation>
    <scope>FUNCTION</scope>
    <scope>NOMENCLATURE</scope>
    <scope>BIOPHYSICOCHEMICAL PROPERTIES</scope>
</reference>
<reference key="7">
    <citation type="journal article" date="2010" name="Plant Cell">
        <title>LAP6/POLYKETIDE SYNTHASE A and LAP5/POLYKETIDE SYNTHASE B encode hydroxyalkyl alpha-pyrone synthases required for pollen development and sporopollenin biosynthesis in Arabidopsis thaliana.</title>
        <authorList>
            <person name="Kim S.S."/>
            <person name="Grienenberger E."/>
            <person name="Lallemand B."/>
            <person name="Colpitts C.C."/>
            <person name="Kim S.Y."/>
            <person name="de Azevedo Souza C."/>
            <person name="Geoffroy P."/>
            <person name="Heintz D."/>
            <person name="Krahn D."/>
            <person name="Kaiser M."/>
            <person name="Kombrink E."/>
            <person name="Heitz T."/>
            <person name="Suh D.-Y."/>
            <person name="Legrand M."/>
            <person name="Douglas C.J."/>
        </authorList>
    </citation>
    <scope>FUNCTION</scope>
    <scope>DISRUPTION PHENOTYPE</scope>
    <scope>DEVELOPMENTAL STAGE</scope>
    <scope>TISSUE SPECIFICITY</scope>
    <scope>SUBCELLULAR LOCATION</scope>
    <source>
        <strain>cv. Columbia</strain>
    </source>
</reference>
<reference key="8">
    <citation type="journal article" date="2010" name="Plant Physiol.">
        <title>LAP5 and LAP6 encode anther-specific proteins with similarity to chalcone synthase essential for pollen exine development in Arabidopsis.</title>
        <authorList>
            <person name="Dobritsa A.A."/>
            <person name="Lei Z."/>
            <person name="Nishikawa S."/>
            <person name="Urbanczyk-Wochniak E."/>
            <person name="Huhman D.V."/>
            <person name="Preuss D."/>
            <person name="Sumner L.W."/>
        </authorList>
    </citation>
    <scope>FUNCTION</scope>
    <scope>DISRUPTION PHENOTYPE</scope>
    <scope>MUTAGENESIS OF GLY-227</scope>
    <scope>TISSUE SPECIFICITY</scope>
    <scope>DEVELOPMENTAL STAGE</scope>
    <scope>GENE FAMILY</scope>
    <source>
        <strain>cv. Landsberg erecta</strain>
    </source>
</reference>
<reference key="9">
    <citation type="journal article" date="2013" name="Plant Physiol.">
        <title>Sporopollenin biosynthetic enzymes interact and constitute a metabolon localized to the endoplasmic reticulum of tapetum cells.</title>
        <authorList>
            <person name="Lallemand B."/>
            <person name="Erhardt M."/>
            <person name="Heitz T."/>
            <person name="Legrand M."/>
        </authorList>
    </citation>
    <scope>SUBCELLULAR LOCATION</scope>
    <scope>TISSUE SPECIFICITY</scope>
    <scope>INTERACTION WITH 4CLL1/ACOS5 AND TKPR1</scope>
</reference>
<gene>
    <name evidence="10" type="primary">PKSB</name>
    <name evidence="16" type="synonym">LAP5</name>
    <name evidence="15" type="ordered locus">At4g34850</name>
    <name evidence="17" type="ORF">T11I11.90</name>
</gene>